<protein>
    <recommendedName>
        <fullName evidence="1">NAD kinase 2</fullName>
        <ecNumber evidence="1">2.7.1.23</ecNumber>
    </recommendedName>
    <alternativeName>
        <fullName evidence="1">ATP-dependent NAD kinase 2</fullName>
    </alternativeName>
</protein>
<keyword id="KW-0067">ATP-binding</keyword>
<keyword id="KW-0963">Cytoplasm</keyword>
<keyword id="KW-0418">Kinase</keyword>
<keyword id="KW-0520">NAD</keyword>
<keyword id="KW-0521">NADP</keyword>
<keyword id="KW-0547">Nucleotide-binding</keyword>
<keyword id="KW-0808">Transferase</keyword>
<evidence type="ECO:0000255" key="1">
    <source>
        <dbReference type="HAMAP-Rule" id="MF_00361"/>
    </source>
</evidence>
<comment type="function">
    <text evidence="1">Involved in the regulation of the intracellular balance of NAD and NADP, and is a key enzyme in the biosynthesis of NADP. Catalyzes specifically the phosphorylation on 2'-hydroxyl of the adenosine moiety of NAD to yield NADP.</text>
</comment>
<comment type="catalytic activity">
    <reaction evidence="1">
        <text>NAD(+) + ATP = ADP + NADP(+) + H(+)</text>
        <dbReference type="Rhea" id="RHEA:18629"/>
        <dbReference type="ChEBI" id="CHEBI:15378"/>
        <dbReference type="ChEBI" id="CHEBI:30616"/>
        <dbReference type="ChEBI" id="CHEBI:57540"/>
        <dbReference type="ChEBI" id="CHEBI:58349"/>
        <dbReference type="ChEBI" id="CHEBI:456216"/>
        <dbReference type="EC" id="2.7.1.23"/>
    </reaction>
</comment>
<comment type="cofactor">
    <cofactor evidence="1">
        <name>a divalent metal cation</name>
        <dbReference type="ChEBI" id="CHEBI:60240"/>
    </cofactor>
</comment>
<comment type="subcellular location">
    <subcellularLocation>
        <location evidence="1">Cytoplasm</location>
    </subcellularLocation>
</comment>
<comment type="similarity">
    <text evidence="1">Belongs to the NAD kinase family.</text>
</comment>
<proteinExistence type="inferred from homology"/>
<gene>
    <name evidence="1" type="primary">nadK2</name>
    <name type="ordered locus">BCE33L4386</name>
</gene>
<feature type="chain" id="PRO_0000229602" description="NAD kinase 2">
    <location>
        <begin position="1"/>
        <end position="267"/>
    </location>
</feature>
<feature type="active site" description="Proton acceptor" evidence="1">
    <location>
        <position position="52"/>
    </location>
</feature>
<feature type="binding site" evidence="1">
    <location>
        <begin position="52"/>
        <end position="53"/>
    </location>
    <ligand>
        <name>NAD(+)</name>
        <dbReference type="ChEBI" id="CHEBI:57540"/>
    </ligand>
</feature>
<feature type="binding site" evidence="1">
    <location>
        <begin position="124"/>
        <end position="125"/>
    </location>
    <ligand>
        <name>NAD(+)</name>
        <dbReference type="ChEBI" id="CHEBI:57540"/>
    </ligand>
</feature>
<feature type="binding site" evidence="1">
    <location>
        <position position="151"/>
    </location>
    <ligand>
        <name>NAD(+)</name>
        <dbReference type="ChEBI" id="CHEBI:57540"/>
    </ligand>
</feature>
<feature type="binding site" evidence="1">
    <location>
        <position position="153"/>
    </location>
    <ligand>
        <name>NAD(+)</name>
        <dbReference type="ChEBI" id="CHEBI:57540"/>
    </ligand>
</feature>
<feature type="binding site" evidence="1">
    <location>
        <begin position="164"/>
        <end position="169"/>
    </location>
    <ligand>
        <name>NAD(+)</name>
        <dbReference type="ChEBI" id="CHEBI:57540"/>
    </ligand>
</feature>
<feature type="binding site" evidence="1">
    <location>
        <position position="188"/>
    </location>
    <ligand>
        <name>NAD(+)</name>
        <dbReference type="ChEBI" id="CHEBI:57540"/>
    </ligand>
</feature>
<organism>
    <name type="scientific">Bacillus cereus (strain ZK / E33L)</name>
    <dbReference type="NCBI Taxonomy" id="288681"/>
    <lineage>
        <taxon>Bacteria</taxon>
        <taxon>Bacillati</taxon>
        <taxon>Bacillota</taxon>
        <taxon>Bacilli</taxon>
        <taxon>Bacillales</taxon>
        <taxon>Bacillaceae</taxon>
        <taxon>Bacillus</taxon>
        <taxon>Bacillus cereus group</taxon>
    </lineage>
</organism>
<accession>Q633F3</accession>
<name>NADK2_BACCZ</name>
<dbReference type="EC" id="2.7.1.23" evidence="1"/>
<dbReference type="EMBL" id="CP000001">
    <property type="protein sequence ID" value="AAU15884.1"/>
    <property type="molecule type" value="Genomic_DNA"/>
</dbReference>
<dbReference type="RefSeq" id="WP_000785168.1">
    <property type="nucleotide sequence ID" value="NZ_CP009968.1"/>
</dbReference>
<dbReference type="SMR" id="Q633F3"/>
<dbReference type="KEGG" id="bcz:BCE33L4386"/>
<dbReference type="PATRIC" id="fig|288681.22.peg.985"/>
<dbReference type="Proteomes" id="UP000002612">
    <property type="component" value="Chromosome"/>
</dbReference>
<dbReference type="GO" id="GO:0005737">
    <property type="term" value="C:cytoplasm"/>
    <property type="evidence" value="ECO:0007669"/>
    <property type="project" value="UniProtKB-SubCell"/>
</dbReference>
<dbReference type="GO" id="GO:0005524">
    <property type="term" value="F:ATP binding"/>
    <property type="evidence" value="ECO:0007669"/>
    <property type="project" value="UniProtKB-KW"/>
</dbReference>
<dbReference type="GO" id="GO:0046872">
    <property type="term" value="F:metal ion binding"/>
    <property type="evidence" value="ECO:0007669"/>
    <property type="project" value="UniProtKB-UniRule"/>
</dbReference>
<dbReference type="GO" id="GO:0051287">
    <property type="term" value="F:NAD binding"/>
    <property type="evidence" value="ECO:0007669"/>
    <property type="project" value="UniProtKB-ARBA"/>
</dbReference>
<dbReference type="GO" id="GO:0003951">
    <property type="term" value="F:NAD+ kinase activity"/>
    <property type="evidence" value="ECO:0007669"/>
    <property type="project" value="UniProtKB-UniRule"/>
</dbReference>
<dbReference type="GO" id="GO:0019674">
    <property type="term" value="P:NAD metabolic process"/>
    <property type="evidence" value="ECO:0007669"/>
    <property type="project" value="InterPro"/>
</dbReference>
<dbReference type="GO" id="GO:0006741">
    <property type="term" value="P:NADP biosynthetic process"/>
    <property type="evidence" value="ECO:0007669"/>
    <property type="project" value="UniProtKB-UniRule"/>
</dbReference>
<dbReference type="FunFam" id="2.60.200.30:FF:000002">
    <property type="entry name" value="NAD kinase"/>
    <property type="match status" value="1"/>
</dbReference>
<dbReference type="FunFam" id="3.40.50.10330:FF:000017">
    <property type="entry name" value="NAD kinase"/>
    <property type="match status" value="1"/>
</dbReference>
<dbReference type="Gene3D" id="3.40.50.10330">
    <property type="entry name" value="Probable inorganic polyphosphate/atp-NAD kinase, domain 1"/>
    <property type="match status" value="1"/>
</dbReference>
<dbReference type="Gene3D" id="2.60.200.30">
    <property type="entry name" value="Probable inorganic polyphosphate/atp-NAD kinase, domain 2"/>
    <property type="match status" value="1"/>
</dbReference>
<dbReference type="HAMAP" id="MF_00361">
    <property type="entry name" value="NAD_kinase"/>
    <property type="match status" value="1"/>
</dbReference>
<dbReference type="InterPro" id="IPR017438">
    <property type="entry name" value="ATP-NAD_kinase_N"/>
</dbReference>
<dbReference type="InterPro" id="IPR017437">
    <property type="entry name" value="ATP-NAD_kinase_PpnK-typ_C"/>
</dbReference>
<dbReference type="InterPro" id="IPR016064">
    <property type="entry name" value="NAD/diacylglycerol_kinase_sf"/>
</dbReference>
<dbReference type="InterPro" id="IPR002504">
    <property type="entry name" value="NADK"/>
</dbReference>
<dbReference type="NCBIfam" id="NF002902">
    <property type="entry name" value="PRK03501.1"/>
    <property type="match status" value="1"/>
</dbReference>
<dbReference type="PANTHER" id="PTHR20275">
    <property type="entry name" value="NAD KINASE"/>
    <property type="match status" value="1"/>
</dbReference>
<dbReference type="PANTHER" id="PTHR20275:SF9">
    <property type="entry name" value="NAD KINASE 2"/>
    <property type="match status" value="1"/>
</dbReference>
<dbReference type="Pfam" id="PF20143">
    <property type="entry name" value="NAD_kinase_C"/>
    <property type="match status" value="1"/>
</dbReference>
<dbReference type="SUPFAM" id="SSF111331">
    <property type="entry name" value="NAD kinase/diacylglycerol kinase-like"/>
    <property type="match status" value="1"/>
</dbReference>
<reference key="1">
    <citation type="journal article" date="2006" name="J. Bacteriol.">
        <title>Pathogenomic sequence analysis of Bacillus cereus and Bacillus thuringiensis isolates closely related to Bacillus anthracis.</title>
        <authorList>
            <person name="Han C.S."/>
            <person name="Xie G."/>
            <person name="Challacombe J.F."/>
            <person name="Altherr M.R."/>
            <person name="Bhotika S.S."/>
            <person name="Bruce D."/>
            <person name="Campbell C.S."/>
            <person name="Campbell M.L."/>
            <person name="Chen J."/>
            <person name="Chertkov O."/>
            <person name="Cleland C."/>
            <person name="Dimitrijevic M."/>
            <person name="Doggett N.A."/>
            <person name="Fawcett J.J."/>
            <person name="Glavina T."/>
            <person name="Goodwin L.A."/>
            <person name="Hill K.K."/>
            <person name="Hitchcock P."/>
            <person name="Jackson P.J."/>
            <person name="Keim P."/>
            <person name="Kewalramani A.R."/>
            <person name="Longmire J."/>
            <person name="Lucas S."/>
            <person name="Malfatti S."/>
            <person name="McMurry K."/>
            <person name="Meincke L.J."/>
            <person name="Misra M."/>
            <person name="Moseman B.L."/>
            <person name="Mundt M."/>
            <person name="Munk A.C."/>
            <person name="Okinaka R.T."/>
            <person name="Parson-Quintana B."/>
            <person name="Reilly L.P."/>
            <person name="Richardson P."/>
            <person name="Robinson D.L."/>
            <person name="Rubin E."/>
            <person name="Saunders E."/>
            <person name="Tapia R."/>
            <person name="Tesmer J.G."/>
            <person name="Thayer N."/>
            <person name="Thompson L.S."/>
            <person name="Tice H."/>
            <person name="Ticknor L.O."/>
            <person name="Wills P.L."/>
            <person name="Brettin T.S."/>
            <person name="Gilna P."/>
        </authorList>
    </citation>
    <scope>NUCLEOTIDE SEQUENCE [LARGE SCALE GENOMIC DNA]</scope>
    <source>
        <strain>ZK / E33L</strain>
    </source>
</reference>
<sequence>MADRRNLFFFYGDDKAKLVEKMKPIYRILEENGFTILDHPKNANAIVSVGDDATFLQAVRKTGFREDCLYAGISTKDEISFYCDFHIDHVDTALQEITKNEIEVRKYPTIEVDVDGSTSFHCLNEFSLRSSIIKTFVVDVHVDDLYFETFRGDGLVVSTPTGSTAYNKSLRGAVVDPLIPCFQVSELASLNNNTYRTLGSPFILNHERTLTLKLRPDGNDYPVIGMDNEALSIKQVEKAVVRLSDKQIKTVKLKNNSFWEKVQRTFL</sequence>